<reference key="1">
    <citation type="submission" date="2006-06" db="EMBL/GenBank/DDBJ databases">
        <title>Complete sequence of chromosome of Mesorhizobium sp. BNC1.</title>
        <authorList>
            <consortium name="US DOE Joint Genome Institute"/>
            <person name="Copeland A."/>
            <person name="Lucas S."/>
            <person name="Lapidus A."/>
            <person name="Barry K."/>
            <person name="Detter J.C."/>
            <person name="Glavina del Rio T."/>
            <person name="Hammon N."/>
            <person name="Israni S."/>
            <person name="Dalin E."/>
            <person name="Tice H."/>
            <person name="Pitluck S."/>
            <person name="Chertkov O."/>
            <person name="Brettin T."/>
            <person name="Bruce D."/>
            <person name="Han C."/>
            <person name="Tapia R."/>
            <person name="Gilna P."/>
            <person name="Schmutz J."/>
            <person name="Larimer F."/>
            <person name="Land M."/>
            <person name="Hauser L."/>
            <person name="Kyrpides N."/>
            <person name="Mikhailova N."/>
            <person name="Richardson P."/>
        </authorList>
    </citation>
    <scope>NUCLEOTIDE SEQUENCE [LARGE SCALE GENOMIC DNA]</scope>
    <source>
        <strain>BNC1</strain>
    </source>
</reference>
<keyword id="KW-0687">Ribonucleoprotein</keyword>
<keyword id="KW-0689">Ribosomal protein</keyword>
<keyword id="KW-0694">RNA-binding</keyword>
<keyword id="KW-0699">rRNA-binding</keyword>
<keyword id="KW-0820">tRNA-binding</keyword>
<gene>
    <name evidence="1" type="primary">rplE</name>
    <name type="ordered locus">Meso_1666</name>
</gene>
<organism>
    <name type="scientific">Chelativorans sp. (strain BNC1)</name>
    <dbReference type="NCBI Taxonomy" id="266779"/>
    <lineage>
        <taxon>Bacteria</taxon>
        <taxon>Pseudomonadati</taxon>
        <taxon>Pseudomonadota</taxon>
        <taxon>Alphaproteobacteria</taxon>
        <taxon>Hyphomicrobiales</taxon>
        <taxon>Phyllobacteriaceae</taxon>
        <taxon>Chelativorans</taxon>
    </lineage>
</organism>
<protein>
    <recommendedName>
        <fullName evidence="1">Large ribosomal subunit protein uL5</fullName>
    </recommendedName>
    <alternativeName>
        <fullName evidence="2">50S ribosomal protein L5</fullName>
    </alternativeName>
</protein>
<accession>Q11HR4</accession>
<name>RL5_CHESB</name>
<feature type="chain" id="PRO_1000052767" description="Large ribosomal subunit protein uL5">
    <location>
        <begin position="1"/>
        <end position="185"/>
    </location>
</feature>
<dbReference type="EMBL" id="CP000390">
    <property type="protein sequence ID" value="ABG63061.1"/>
    <property type="molecule type" value="Genomic_DNA"/>
</dbReference>
<dbReference type="SMR" id="Q11HR4"/>
<dbReference type="STRING" id="266779.Meso_1666"/>
<dbReference type="KEGG" id="mes:Meso_1666"/>
<dbReference type="eggNOG" id="COG0094">
    <property type="taxonomic scope" value="Bacteria"/>
</dbReference>
<dbReference type="HOGENOM" id="CLU_061015_2_1_5"/>
<dbReference type="OrthoDB" id="9806626at2"/>
<dbReference type="GO" id="GO:1990904">
    <property type="term" value="C:ribonucleoprotein complex"/>
    <property type="evidence" value="ECO:0007669"/>
    <property type="project" value="UniProtKB-KW"/>
</dbReference>
<dbReference type="GO" id="GO:0005840">
    <property type="term" value="C:ribosome"/>
    <property type="evidence" value="ECO:0007669"/>
    <property type="project" value="UniProtKB-KW"/>
</dbReference>
<dbReference type="GO" id="GO:0019843">
    <property type="term" value="F:rRNA binding"/>
    <property type="evidence" value="ECO:0007669"/>
    <property type="project" value="UniProtKB-UniRule"/>
</dbReference>
<dbReference type="GO" id="GO:0003735">
    <property type="term" value="F:structural constituent of ribosome"/>
    <property type="evidence" value="ECO:0007669"/>
    <property type="project" value="InterPro"/>
</dbReference>
<dbReference type="GO" id="GO:0000049">
    <property type="term" value="F:tRNA binding"/>
    <property type="evidence" value="ECO:0007669"/>
    <property type="project" value="UniProtKB-UniRule"/>
</dbReference>
<dbReference type="GO" id="GO:0006412">
    <property type="term" value="P:translation"/>
    <property type="evidence" value="ECO:0007669"/>
    <property type="project" value="UniProtKB-UniRule"/>
</dbReference>
<dbReference type="FunFam" id="3.30.1440.10:FF:000001">
    <property type="entry name" value="50S ribosomal protein L5"/>
    <property type="match status" value="1"/>
</dbReference>
<dbReference type="Gene3D" id="3.30.1440.10">
    <property type="match status" value="1"/>
</dbReference>
<dbReference type="HAMAP" id="MF_01333_B">
    <property type="entry name" value="Ribosomal_uL5_B"/>
    <property type="match status" value="1"/>
</dbReference>
<dbReference type="InterPro" id="IPR002132">
    <property type="entry name" value="Ribosomal_uL5"/>
</dbReference>
<dbReference type="InterPro" id="IPR020930">
    <property type="entry name" value="Ribosomal_uL5_bac-type"/>
</dbReference>
<dbReference type="InterPro" id="IPR031309">
    <property type="entry name" value="Ribosomal_uL5_C"/>
</dbReference>
<dbReference type="InterPro" id="IPR020929">
    <property type="entry name" value="Ribosomal_uL5_CS"/>
</dbReference>
<dbReference type="InterPro" id="IPR022803">
    <property type="entry name" value="Ribosomal_uL5_dom_sf"/>
</dbReference>
<dbReference type="InterPro" id="IPR031310">
    <property type="entry name" value="Ribosomal_uL5_N"/>
</dbReference>
<dbReference type="NCBIfam" id="NF000585">
    <property type="entry name" value="PRK00010.1"/>
    <property type="match status" value="1"/>
</dbReference>
<dbReference type="PANTHER" id="PTHR11994">
    <property type="entry name" value="60S RIBOSOMAL PROTEIN L11-RELATED"/>
    <property type="match status" value="1"/>
</dbReference>
<dbReference type="Pfam" id="PF00281">
    <property type="entry name" value="Ribosomal_L5"/>
    <property type="match status" value="1"/>
</dbReference>
<dbReference type="Pfam" id="PF00673">
    <property type="entry name" value="Ribosomal_L5_C"/>
    <property type="match status" value="1"/>
</dbReference>
<dbReference type="PIRSF" id="PIRSF002161">
    <property type="entry name" value="Ribosomal_L5"/>
    <property type="match status" value="1"/>
</dbReference>
<dbReference type="SUPFAM" id="SSF55282">
    <property type="entry name" value="RL5-like"/>
    <property type="match status" value="1"/>
</dbReference>
<dbReference type="PROSITE" id="PS00358">
    <property type="entry name" value="RIBOSOMAL_L5"/>
    <property type="match status" value="1"/>
</dbReference>
<comment type="function">
    <text evidence="1">This is one of the proteins that bind and probably mediate the attachment of the 5S RNA into the large ribosomal subunit, where it forms part of the central protuberance. In the 70S ribosome it contacts protein S13 of the 30S subunit (bridge B1b), connecting the 2 subunits; this bridge is implicated in subunit movement. Contacts the P site tRNA; the 5S rRNA and some of its associated proteins might help stabilize positioning of ribosome-bound tRNAs.</text>
</comment>
<comment type="subunit">
    <text evidence="1">Part of the 50S ribosomal subunit; part of the 5S rRNA/L5/L18/L25 subcomplex. Contacts the 5S rRNA and the P site tRNA. Forms a bridge to the 30S subunit in the 70S ribosome.</text>
</comment>
<comment type="similarity">
    <text evidence="1">Belongs to the universal ribosomal protein uL5 family.</text>
</comment>
<evidence type="ECO:0000255" key="1">
    <source>
        <dbReference type="HAMAP-Rule" id="MF_01333"/>
    </source>
</evidence>
<evidence type="ECO:0000305" key="2"/>
<proteinExistence type="inferred from homology"/>
<sequence length="185" mass="20946">MAKAGYQPRLKKHYEEAIRKQLLETFKYENEMQVPRIDKVVINMGVGEATGDSKKPSVAAEDLALIAGQKAVITRARNSIAGFKVREGMPIGAKVTLRKDRMYEFLDRLVNVALPRVRDFRGLSPKSFDGHGNFAMGIKEHIVFPEINYDKVDQIWGMDIIVCTTAKTDDEARALLKAFNFPFRQ</sequence>